<name>MIAB_JANMA</name>
<sequence>MQKKIYIKTFGCQMNEYDSDKMVDVLNASEGLIKTDTPEDADVILLNTCSVREKAQEKVFSDLGRLRELKFNNPDLVIGVGGCVASQEGDAIVKRAPYVDLVFGPQTLHRLPEMLKQRRSTGRSQVDISFPEIEKFDHMPPAKVEGATAFVSIMEGCSKYCSYCVVPYTRGEEVSRRFEDVLAEVAGLEAQGVKEITLLGQNVNAYRGEMADGEIADFALLIEYIAELEGIERIRFVTSHPKEFTQRLIDAYAKVPKLVNHLYLPAQHGSDRILAAMKRGYTSLEYKSILRRLREVRPNISISSDFIVGFPGETDADFEAMMKLINDIGYDNSFSFIFSPRPGTPAANLEDDTPHEVKLQRLQRLQAVIDQNTRRYSDEMVGTVQRILVEGPSKKDPDELQGRTENNRVVNFAAGEHGARLIGQMVDVNIVQSFAYTLRGEIIVKQ</sequence>
<dbReference type="EC" id="2.8.4.3" evidence="1"/>
<dbReference type="EMBL" id="CP000269">
    <property type="protein sequence ID" value="ABR88458.1"/>
    <property type="molecule type" value="Genomic_DNA"/>
</dbReference>
<dbReference type="RefSeq" id="WP_012078296.1">
    <property type="nucleotide sequence ID" value="NC_009659.1"/>
</dbReference>
<dbReference type="SMR" id="A6SV24"/>
<dbReference type="STRING" id="375286.mma_0431"/>
<dbReference type="KEGG" id="mms:mma_0431"/>
<dbReference type="eggNOG" id="COG0621">
    <property type="taxonomic scope" value="Bacteria"/>
</dbReference>
<dbReference type="HOGENOM" id="CLU_018697_2_0_4"/>
<dbReference type="OrthoDB" id="9805215at2"/>
<dbReference type="Proteomes" id="UP000006388">
    <property type="component" value="Chromosome"/>
</dbReference>
<dbReference type="GO" id="GO:0005829">
    <property type="term" value="C:cytosol"/>
    <property type="evidence" value="ECO:0007669"/>
    <property type="project" value="TreeGrafter"/>
</dbReference>
<dbReference type="GO" id="GO:0051539">
    <property type="term" value="F:4 iron, 4 sulfur cluster binding"/>
    <property type="evidence" value="ECO:0007669"/>
    <property type="project" value="UniProtKB-UniRule"/>
</dbReference>
<dbReference type="GO" id="GO:0046872">
    <property type="term" value="F:metal ion binding"/>
    <property type="evidence" value="ECO:0007669"/>
    <property type="project" value="UniProtKB-KW"/>
</dbReference>
<dbReference type="GO" id="GO:0035597">
    <property type="term" value="F:N6-isopentenyladenosine methylthiotransferase activity"/>
    <property type="evidence" value="ECO:0007669"/>
    <property type="project" value="TreeGrafter"/>
</dbReference>
<dbReference type="CDD" id="cd01335">
    <property type="entry name" value="Radical_SAM"/>
    <property type="match status" value="1"/>
</dbReference>
<dbReference type="FunFam" id="3.40.50.12160:FF:000001">
    <property type="entry name" value="tRNA-2-methylthio-N(6)-dimethylallyladenosine synthase"/>
    <property type="match status" value="1"/>
</dbReference>
<dbReference type="FunFam" id="3.80.30.20:FF:000001">
    <property type="entry name" value="tRNA-2-methylthio-N(6)-dimethylallyladenosine synthase 2"/>
    <property type="match status" value="1"/>
</dbReference>
<dbReference type="Gene3D" id="3.40.50.12160">
    <property type="entry name" value="Methylthiotransferase, N-terminal domain"/>
    <property type="match status" value="1"/>
</dbReference>
<dbReference type="Gene3D" id="3.80.30.20">
    <property type="entry name" value="tm_1862 like domain"/>
    <property type="match status" value="1"/>
</dbReference>
<dbReference type="HAMAP" id="MF_01864">
    <property type="entry name" value="tRNA_metthiotr_MiaB"/>
    <property type="match status" value="1"/>
</dbReference>
<dbReference type="InterPro" id="IPR006638">
    <property type="entry name" value="Elp3/MiaA/NifB-like_rSAM"/>
</dbReference>
<dbReference type="InterPro" id="IPR005839">
    <property type="entry name" value="Methylthiotransferase"/>
</dbReference>
<dbReference type="InterPro" id="IPR020612">
    <property type="entry name" value="Methylthiotransferase_CS"/>
</dbReference>
<dbReference type="InterPro" id="IPR013848">
    <property type="entry name" value="Methylthiotransferase_N"/>
</dbReference>
<dbReference type="InterPro" id="IPR038135">
    <property type="entry name" value="Methylthiotransferase_N_sf"/>
</dbReference>
<dbReference type="InterPro" id="IPR006463">
    <property type="entry name" value="MiaB_methiolase"/>
</dbReference>
<dbReference type="InterPro" id="IPR007197">
    <property type="entry name" value="rSAM"/>
</dbReference>
<dbReference type="InterPro" id="IPR023404">
    <property type="entry name" value="rSAM_horseshoe"/>
</dbReference>
<dbReference type="InterPro" id="IPR002792">
    <property type="entry name" value="TRAM_dom"/>
</dbReference>
<dbReference type="NCBIfam" id="TIGR01574">
    <property type="entry name" value="miaB-methiolase"/>
    <property type="match status" value="1"/>
</dbReference>
<dbReference type="NCBIfam" id="TIGR00089">
    <property type="entry name" value="MiaB/RimO family radical SAM methylthiotransferase"/>
    <property type="match status" value="1"/>
</dbReference>
<dbReference type="PANTHER" id="PTHR43020">
    <property type="entry name" value="CDK5 REGULATORY SUBUNIT-ASSOCIATED PROTEIN 1"/>
    <property type="match status" value="1"/>
</dbReference>
<dbReference type="PANTHER" id="PTHR43020:SF2">
    <property type="entry name" value="MITOCHONDRIAL TRNA METHYLTHIOTRANSFERASE CDK5RAP1"/>
    <property type="match status" value="1"/>
</dbReference>
<dbReference type="Pfam" id="PF04055">
    <property type="entry name" value="Radical_SAM"/>
    <property type="match status" value="1"/>
</dbReference>
<dbReference type="Pfam" id="PF01938">
    <property type="entry name" value="TRAM"/>
    <property type="match status" value="1"/>
</dbReference>
<dbReference type="Pfam" id="PF00919">
    <property type="entry name" value="UPF0004"/>
    <property type="match status" value="1"/>
</dbReference>
<dbReference type="SFLD" id="SFLDF00273">
    <property type="entry name" value="(dimethylallyl)adenosine_tRNA"/>
    <property type="match status" value="1"/>
</dbReference>
<dbReference type="SFLD" id="SFLDG01082">
    <property type="entry name" value="B12-binding_domain_containing"/>
    <property type="match status" value="1"/>
</dbReference>
<dbReference type="SFLD" id="SFLDS00029">
    <property type="entry name" value="Radical_SAM"/>
    <property type="match status" value="1"/>
</dbReference>
<dbReference type="SMART" id="SM00729">
    <property type="entry name" value="Elp3"/>
    <property type="match status" value="1"/>
</dbReference>
<dbReference type="SUPFAM" id="SSF102114">
    <property type="entry name" value="Radical SAM enzymes"/>
    <property type="match status" value="1"/>
</dbReference>
<dbReference type="PROSITE" id="PS51449">
    <property type="entry name" value="MTTASE_N"/>
    <property type="match status" value="1"/>
</dbReference>
<dbReference type="PROSITE" id="PS01278">
    <property type="entry name" value="MTTASE_RADICAL"/>
    <property type="match status" value="1"/>
</dbReference>
<dbReference type="PROSITE" id="PS51918">
    <property type="entry name" value="RADICAL_SAM"/>
    <property type="match status" value="1"/>
</dbReference>
<dbReference type="PROSITE" id="PS50926">
    <property type="entry name" value="TRAM"/>
    <property type="match status" value="1"/>
</dbReference>
<gene>
    <name evidence="1" type="primary">miaB</name>
    <name type="ordered locus">mma_0431</name>
</gene>
<keyword id="KW-0004">4Fe-4S</keyword>
<keyword id="KW-0963">Cytoplasm</keyword>
<keyword id="KW-0408">Iron</keyword>
<keyword id="KW-0411">Iron-sulfur</keyword>
<keyword id="KW-0479">Metal-binding</keyword>
<keyword id="KW-0949">S-adenosyl-L-methionine</keyword>
<keyword id="KW-0808">Transferase</keyword>
<keyword id="KW-0819">tRNA processing</keyword>
<reference key="1">
    <citation type="journal article" date="2007" name="PLoS Genet.">
        <title>Genome analysis of Minibacterium massiliensis highlights the convergent evolution of water-living bacteria.</title>
        <authorList>
            <person name="Audic S."/>
            <person name="Robert C."/>
            <person name="Campagna B."/>
            <person name="Parinello H."/>
            <person name="Claverie J.-M."/>
            <person name="Raoult D."/>
            <person name="Drancourt M."/>
        </authorList>
    </citation>
    <scope>NUCLEOTIDE SEQUENCE [LARGE SCALE GENOMIC DNA]</scope>
    <source>
        <strain>Marseille</strain>
    </source>
</reference>
<comment type="function">
    <text evidence="1">Catalyzes the methylthiolation of N6-(dimethylallyl)adenosine (i(6)A), leading to the formation of 2-methylthio-N6-(dimethylallyl)adenosine (ms(2)i(6)A) at position 37 in tRNAs that read codons beginning with uridine.</text>
</comment>
<comment type="catalytic activity">
    <reaction evidence="1">
        <text>N(6)-dimethylallyladenosine(37) in tRNA + (sulfur carrier)-SH + AH2 + 2 S-adenosyl-L-methionine = 2-methylsulfanyl-N(6)-dimethylallyladenosine(37) in tRNA + (sulfur carrier)-H + 5'-deoxyadenosine + L-methionine + A + S-adenosyl-L-homocysteine + 2 H(+)</text>
        <dbReference type="Rhea" id="RHEA:37067"/>
        <dbReference type="Rhea" id="RHEA-COMP:10375"/>
        <dbReference type="Rhea" id="RHEA-COMP:10376"/>
        <dbReference type="Rhea" id="RHEA-COMP:14737"/>
        <dbReference type="Rhea" id="RHEA-COMP:14739"/>
        <dbReference type="ChEBI" id="CHEBI:13193"/>
        <dbReference type="ChEBI" id="CHEBI:15378"/>
        <dbReference type="ChEBI" id="CHEBI:17319"/>
        <dbReference type="ChEBI" id="CHEBI:17499"/>
        <dbReference type="ChEBI" id="CHEBI:29917"/>
        <dbReference type="ChEBI" id="CHEBI:57844"/>
        <dbReference type="ChEBI" id="CHEBI:57856"/>
        <dbReference type="ChEBI" id="CHEBI:59789"/>
        <dbReference type="ChEBI" id="CHEBI:64428"/>
        <dbReference type="ChEBI" id="CHEBI:74415"/>
        <dbReference type="ChEBI" id="CHEBI:74417"/>
        <dbReference type="EC" id="2.8.4.3"/>
    </reaction>
</comment>
<comment type="cofactor">
    <cofactor evidence="1">
        <name>[4Fe-4S] cluster</name>
        <dbReference type="ChEBI" id="CHEBI:49883"/>
    </cofactor>
    <text evidence="1">Binds 2 [4Fe-4S] clusters. One cluster is coordinated with 3 cysteines and an exchangeable S-adenosyl-L-methionine.</text>
</comment>
<comment type="subunit">
    <text evidence="1">Monomer.</text>
</comment>
<comment type="subcellular location">
    <subcellularLocation>
        <location evidence="1">Cytoplasm</location>
    </subcellularLocation>
</comment>
<comment type="similarity">
    <text evidence="1">Belongs to the methylthiotransferase family. MiaB subfamily.</text>
</comment>
<proteinExistence type="inferred from homology"/>
<accession>A6SV24</accession>
<evidence type="ECO:0000255" key="1">
    <source>
        <dbReference type="HAMAP-Rule" id="MF_01864"/>
    </source>
</evidence>
<evidence type="ECO:0000255" key="2">
    <source>
        <dbReference type="PROSITE-ProRule" id="PRU01266"/>
    </source>
</evidence>
<organism>
    <name type="scientific">Janthinobacterium sp. (strain Marseille)</name>
    <name type="common">Minibacterium massiliensis</name>
    <dbReference type="NCBI Taxonomy" id="375286"/>
    <lineage>
        <taxon>Bacteria</taxon>
        <taxon>Pseudomonadati</taxon>
        <taxon>Pseudomonadota</taxon>
        <taxon>Betaproteobacteria</taxon>
        <taxon>Burkholderiales</taxon>
        <taxon>Oxalobacteraceae</taxon>
        <taxon>Janthinobacterium</taxon>
    </lineage>
</organism>
<protein>
    <recommendedName>
        <fullName evidence="1">tRNA-2-methylthio-N(6)-dimethylallyladenosine synthase</fullName>
        <ecNumber evidence="1">2.8.4.3</ecNumber>
    </recommendedName>
    <alternativeName>
        <fullName evidence="1">(Dimethylallyl)adenosine tRNA methylthiotransferase MiaB</fullName>
    </alternativeName>
    <alternativeName>
        <fullName evidence="1">tRNA-i(6)A37 methylthiotransferase</fullName>
    </alternativeName>
</protein>
<feature type="chain" id="PRO_0000374347" description="tRNA-2-methylthio-N(6)-dimethylallyladenosine synthase">
    <location>
        <begin position="1"/>
        <end position="446"/>
    </location>
</feature>
<feature type="domain" description="MTTase N-terminal" evidence="1">
    <location>
        <begin position="3"/>
        <end position="120"/>
    </location>
</feature>
<feature type="domain" description="Radical SAM core" evidence="2">
    <location>
        <begin position="143"/>
        <end position="375"/>
    </location>
</feature>
<feature type="domain" description="TRAM" evidence="1">
    <location>
        <begin position="378"/>
        <end position="444"/>
    </location>
</feature>
<feature type="binding site" evidence="1">
    <location>
        <position position="12"/>
    </location>
    <ligand>
        <name>[4Fe-4S] cluster</name>
        <dbReference type="ChEBI" id="CHEBI:49883"/>
        <label>1</label>
    </ligand>
</feature>
<feature type="binding site" evidence="1">
    <location>
        <position position="49"/>
    </location>
    <ligand>
        <name>[4Fe-4S] cluster</name>
        <dbReference type="ChEBI" id="CHEBI:49883"/>
        <label>1</label>
    </ligand>
</feature>
<feature type="binding site" evidence="1">
    <location>
        <position position="83"/>
    </location>
    <ligand>
        <name>[4Fe-4S] cluster</name>
        <dbReference type="ChEBI" id="CHEBI:49883"/>
        <label>1</label>
    </ligand>
</feature>
<feature type="binding site" evidence="1">
    <location>
        <position position="157"/>
    </location>
    <ligand>
        <name>[4Fe-4S] cluster</name>
        <dbReference type="ChEBI" id="CHEBI:49883"/>
        <label>2</label>
        <note>4Fe-4S-S-AdoMet</note>
    </ligand>
</feature>
<feature type="binding site" evidence="1">
    <location>
        <position position="161"/>
    </location>
    <ligand>
        <name>[4Fe-4S] cluster</name>
        <dbReference type="ChEBI" id="CHEBI:49883"/>
        <label>2</label>
        <note>4Fe-4S-S-AdoMet</note>
    </ligand>
</feature>
<feature type="binding site" evidence="1">
    <location>
        <position position="164"/>
    </location>
    <ligand>
        <name>[4Fe-4S] cluster</name>
        <dbReference type="ChEBI" id="CHEBI:49883"/>
        <label>2</label>
        <note>4Fe-4S-S-AdoMet</note>
    </ligand>
</feature>